<accession>Q9CA71</accession>
<accession>Q67XV8</accession>
<sequence length="521" mass="58989">MKRGKKNSDAGDRLTNSDTRTGSSELNAMMKPSLSSMKTMGLLLAVLMVASVMFSLSVVLRDPPSDDVIETEAASRVLQSRLHQDGGLSEKKAQLGNINLVPSFDKESCLSRYEASLYRKESPFKQSSYLDYRLQRYEDLHRRCGPFTRSYNLTLDKLKSGDRSDGEVSGCRYVIWLNSNGDLGNRMLSLASAFLYALLTNRFLLVELGVDMADLFCEPFPNTTWFLPPEFPLNSHFNEQSLLRNSGNPMVAYRHVVRDSSDQQKLFFCEDSQVLLEETPWLILKADSFFLPSLFSVSSFKQELQMLFPEKDTAFHFLSQYLFHPTNVVWGLITRYYNAYLAKADQRIGIYIGVSESGNEQFQHLIDQILACGTRHKLLPEVDKQRNLPSSQVLNRKSKAVFISSSSPGYFKSIRDVYWENPTVMGEIISVHKPSYKDYQKTPRNMESKRAWAEIYLLSCSDALVVTGLWSSLVEVAHGLGGLKPWVLNKAENGTAHEPYCVKARSIEPCSQATLFHGCKD</sequence>
<feature type="chain" id="PRO_0000193912" description="Fucosyltransferase 3">
    <location>
        <begin position="1"/>
        <end position="521"/>
    </location>
</feature>
<feature type="topological domain" description="Cytoplasmic" evidence="2">
    <location>
        <begin position="1"/>
        <end position="39"/>
    </location>
</feature>
<feature type="transmembrane region" description="Helical; Signal-anchor for type II membrane protein" evidence="2">
    <location>
        <begin position="40"/>
        <end position="60"/>
    </location>
</feature>
<feature type="topological domain" description="Lumenal" evidence="2">
    <location>
        <begin position="61"/>
        <end position="521"/>
    </location>
</feature>
<feature type="region of interest" description="Disordered" evidence="3">
    <location>
        <begin position="1"/>
        <end position="29"/>
    </location>
</feature>
<feature type="compositionally biased region" description="Basic and acidic residues" evidence="3">
    <location>
        <begin position="1"/>
        <end position="12"/>
    </location>
</feature>
<feature type="compositionally biased region" description="Polar residues" evidence="3">
    <location>
        <begin position="14"/>
        <end position="26"/>
    </location>
</feature>
<feature type="glycosylation site" description="N-linked (GlcNAc...) asparagine" evidence="2">
    <location>
        <position position="152"/>
    </location>
</feature>
<feature type="glycosylation site" description="N-linked (GlcNAc...) asparagine" evidence="2">
    <location>
        <position position="222"/>
    </location>
</feature>
<feature type="glycosylation site" description="N-linked (GlcNAc...) asparagine" evidence="2">
    <location>
        <position position="493"/>
    </location>
</feature>
<name>FUT3_ARATH</name>
<reference key="1">
    <citation type="journal article" date="2000" name="Nature">
        <title>Sequence and analysis of chromosome 1 of the plant Arabidopsis thaliana.</title>
        <authorList>
            <person name="Theologis A."/>
            <person name="Ecker J.R."/>
            <person name="Palm C.J."/>
            <person name="Federspiel N.A."/>
            <person name="Kaul S."/>
            <person name="White O."/>
            <person name="Alonso J."/>
            <person name="Altafi H."/>
            <person name="Araujo R."/>
            <person name="Bowman C.L."/>
            <person name="Brooks S.Y."/>
            <person name="Buehler E."/>
            <person name="Chan A."/>
            <person name="Chao Q."/>
            <person name="Chen H."/>
            <person name="Cheuk R.F."/>
            <person name="Chin C.W."/>
            <person name="Chung M.K."/>
            <person name="Conn L."/>
            <person name="Conway A.B."/>
            <person name="Conway A.R."/>
            <person name="Creasy T.H."/>
            <person name="Dewar K."/>
            <person name="Dunn P."/>
            <person name="Etgu P."/>
            <person name="Feldblyum T.V."/>
            <person name="Feng J.-D."/>
            <person name="Fong B."/>
            <person name="Fujii C.Y."/>
            <person name="Gill J.E."/>
            <person name="Goldsmith A.D."/>
            <person name="Haas B."/>
            <person name="Hansen N.F."/>
            <person name="Hughes B."/>
            <person name="Huizar L."/>
            <person name="Hunter J.L."/>
            <person name="Jenkins J."/>
            <person name="Johnson-Hopson C."/>
            <person name="Khan S."/>
            <person name="Khaykin E."/>
            <person name="Kim C.J."/>
            <person name="Koo H.L."/>
            <person name="Kremenetskaia I."/>
            <person name="Kurtz D.B."/>
            <person name="Kwan A."/>
            <person name="Lam B."/>
            <person name="Langin-Hooper S."/>
            <person name="Lee A."/>
            <person name="Lee J.M."/>
            <person name="Lenz C.A."/>
            <person name="Li J.H."/>
            <person name="Li Y.-P."/>
            <person name="Lin X."/>
            <person name="Liu S.X."/>
            <person name="Liu Z.A."/>
            <person name="Luros J.S."/>
            <person name="Maiti R."/>
            <person name="Marziali A."/>
            <person name="Militscher J."/>
            <person name="Miranda M."/>
            <person name="Nguyen M."/>
            <person name="Nierman W.C."/>
            <person name="Osborne B.I."/>
            <person name="Pai G."/>
            <person name="Peterson J."/>
            <person name="Pham P.K."/>
            <person name="Rizzo M."/>
            <person name="Rooney T."/>
            <person name="Rowley D."/>
            <person name="Sakano H."/>
            <person name="Salzberg S.L."/>
            <person name="Schwartz J.R."/>
            <person name="Shinn P."/>
            <person name="Southwick A.M."/>
            <person name="Sun H."/>
            <person name="Tallon L.J."/>
            <person name="Tambunga G."/>
            <person name="Toriumi M.J."/>
            <person name="Town C.D."/>
            <person name="Utterback T."/>
            <person name="Van Aken S."/>
            <person name="Vaysberg M."/>
            <person name="Vysotskaia V.S."/>
            <person name="Walker M."/>
            <person name="Wu D."/>
            <person name="Yu G."/>
            <person name="Fraser C.M."/>
            <person name="Venter J.C."/>
            <person name="Davis R.W."/>
        </authorList>
    </citation>
    <scope>NUCLEOTIDE SEQUENCE [LARGE SCALE GENOMIC DNA]</scope>
    <source>
        <strain>cv. Columbia</strain>
    </source>
</reference>
<reference key="2">
    <citation type="journal article" date="2017" name="Plant J.">
        <title>Araport11: a complete reannotation of the Arabidopsis thaliana reference genome.</title>
        <authorList>
            <person name="Cheng C.Y."/>
            <person name="Krishnakumar V."/>
            <person name="Chan A.P."/>
            <person name="Thibaud-Nissen F."/>
            <person name="Schobel S."/>
            <person name="Town C.D."/>
        </authorList>
    </citation>
    <scope>GENOME REANNOTATION</scope>
    <source>
        <strain>cv. Columbia</strain>
    </source>
</reference>
<reference key="3">
    <citation type="submission" date="2004-09" db="EMBL/GenBank/DDBJ databases">
        <title>Large-scale analysis of RIKEN Arabidopsis full-length (RAFL) cDNAs.</title>
        <authorList>
            <person name="Totoki Y."/>
            <person name="Seki M."/>
            <person name="Ishida J."/>
            <person name="Nakajima M."/>
            <person name="Enju A."/>
            <person name="Kamiya A."/>
            <person name="Narusaka M."/>
            <person name="Shin-i T."/>
            <person name="Nakagawa M."/>
            <person name="Sakamoto N."/>
            <person name="Oishi K."/>
            <person name="Kohara Y."/>
            <person name="Kobayashi M."/>
            <person name="Toyoda A."/>
            <person name="Sakaki Y."/>
            <person name="Sakurai T."/>
            <person name="Iida K."/>
            <person name="Akiyama K."/>
            <person name="Satou M."/>
            <person name="Toyoda T."/>
            <person name="Konagaya A."/>
            <person name="Carninci P."/>
            <person name="Kawai J."/>
            <person name="Hayashizaki Y."/>
            <person name="Shinozaki K."/>
        </authorList>
    </citation>
    <scope>NUCLEOTIDE SEQUENCE [LARGE SCALE MRNA]</scope>
    <source>
        <strain>cv. Columbia</strain>
    </source>
</reference>
<reference key="4">
    <citation type="journal article" date="2001" name="Plant Physiol.">
        <title>Characterization of a family of Arabidopsis genes related to xyloglucan fucosyltransferase1.</title>
        <authorList>
            <person name="Sarria R."/>
            <person name="Wagner T.A."/>
            <person name="O'Neill M.A."/>
            <person name="Faik A."/>
            <person name="Wilkerson C.G."/>
            <person name="Keegstra K."/>
            <person name="Raikhel N.V."/>
        </authorList>
    </citation>
    <scope>NUCLEOTIDE SEQUENCE [MRNA] OF 9-521</scope>
</reference>
<proteinExistence type="evidence at transcript level"/>
<gene>
    <name type="primary">FUT3</name>
    <name type="ordered locus">At1g74420</name>
    <name type="ORF">F1M20.10</name>
</gene>
<comment type="function">
    <text>May be involved in cell wall biosynthesis. May act as a fucosyltransferase.</text>
</comment>
<comment type="pathway">
    <text>Protein modification; protein glycosylation.</text>
</comment>
<comment type="subcellular location">
    <subcellularLocation>
        <location evidence="1">Golgi apparatus</location>
        <location evidence="1">Golgi stack membrane</location>
        <topology evidence="1">Single-pass type II membrane protein</topology>
    </subcellularLocation>
    <text evidence="1">Membrane-bound form in trans cisternae of Golgi.</text>
</comment>
<comment type="alternative products">
    <event type="alternative splicing"/>
    <isoform>
        <id>Q9CA71-1</id>
        <name>1</name>
        <sequence type="displayed"/>
    </isoform>
    <text>A number of isoforms are produced. According to EST sequences.</text>
</comment>
<comment type="tissue specificity">
    <text>Expressed in roots, stems, leaves, flowers, siliques and seedlings.</text>
</comment>
<comment type="similarity">
    <text evidence="4">Belongs to the glycosyltransferase 37 family.</text>
</comment>
<comment type="sequence caution" evidence="4">
    <conflict type="erroneous gene model prediction">
        <sequence resource="EMBL-CDS" id="AAG52352"/>
    </conflict>
</comment>
<comment type="sequence caution" evidence="4">
    <conflict type="erroneous initiation">
        <sequence resource="EMBL-CDS" id="AAL50622"/>
    </conflict>
</comment>
<protein>
    <recommendedName>
        <fullName>Fucosyltransferase 3</fullName>
        <shortName>AtFUT3</shortName>
        <ecNumber>2.4.1.-</ecNumber>
    </recommendedName>
</protein>
<evidence type="ECO:0000250" key="1"/>
<evidence type="ECO:0000255" key="2"/>
<evidence type="ECO:0000256" key="3">
    <source>
        <dbReference type="SAM" id="MobiDB-lite"/>
    </source>
</evidence>
<evidence type="ECO:0000305" key="4"/>
<keyword id="KW-0025">Alternative splicing</keyword>
<keyword id="KW-0961">Cell wall biogenesis/degradation</keyword>
<keyword id="KW-0325">Glycoprotein</keyword>
<keyword id="KW-0328">Glycosyltransferase</keyword>
<keyword id="KW-0333">Golgi apparatus</keyword>
<keyword id="KW-0472">Membrane</keyword>
<keyword id="KW-1185">Reference proteome</keyword>
<keyword id="KW-0735">Signal-anchor</keyword>
<keyword id="KW-0808">Transferase</keyword>
<keyword id="KW-0812">Transmembrane</keyword>
<keyword id="KW-1133">Transmembrane helix</keyword>
<dbReference type="EC" id="2.4.1.-"/>
<dbReference type="EMBL" id="AC011765">
    <property type="protein sequence ID" value="AAG52352.1"/>
    <property type="status" value="ALT_SEQ"/>
    <property type="molecule type" value="Genomic_DNA"/>
</dbReference>
<dbReference type="EMBL" id="CP002684">
    <property type="protein sequence ID" value="AEE35589.1"/>
    <property type="molecule type" value="Genomic_DNA"/>
</dbReference>
<dbReference type="EMBL" id="AK175419">
    <property type="protein sequence ID" value="BAD43182.1"/>
    <property type="molecule type" value="mRNA"/>
</dbReference>
<dbReference type="EMBL" id="AK176710">
    <property type="protein sequence ID" value="BAD44473.1"/>
    <property type="molecule type" value="mRNA"/>
</dbReference>
<dbReference type="EMBL" id="AF417473">
    <property type="protein sequence ID" value="AAL50622.1"/>
    <property type="status" value="ALT_INIT"/>
    <property type="molecule type" value="mRNA"/>
</dbReference>
<dbReference type="RefSeq" id="NP_177582.3">
    <molecule id="Q9CA71-1"/>
    <property type="nucleotide sequence ID" value="NM_106102.4"/>
</dbReference>
<dbReference type="SMR" id="Q9CA71"/>
<dbReference type="STRING" id="3702.Q9CA71"/>
<dbReference type="CAZy" id="GT37">
    <property type="family name" value="Glycosyltransferase Family 37"/>
</dbReference>
<dbReference type="GlyCosmos" id="Q9CA71">
    <property type="glycosylation" value="3 sites, No reported glycans"/>
</dbReference>
<dbReference type="GlyGen" id="Q9CA71">
    <property type="glycosylation" value="3 sites"/>
</dbReference>
<dbReference type="PaxDb" id="3702-AT1G74420.2"/>
<dbReference type="ProteomicsDB" id="230564">
    <molecule id="Q9CA71-1"/>
</dbReference>
<dbReference type="EnsemblPlants" id="AT1G74420.1">
    <molecule id="Q9CA71-1"/>
    <property type="protein sequence ID" value="AT1G74420.1"/>
    <property type="gene ID" value="AT1G74420"/>
</dbReference>
<dbReference type="GeneID" id="843783"/>
<dbReference type="Gramene" id="AT1G74420.1">
    <molecule id="Q9CA71-1"/>
    <property type="protein sequence ID" value="AT1G74420.1"/>
    <property type="gene ID" value="AT1G74420"/>
</dbReference>
<dbReference type="KEGG" id="ath:AT1G74420"/>
<dbReference type="Araport" id="AT1G74420"/>
<dbReference type="TAIR" id="AT1G74420">
    <property type="gene designation" value="FUT3"/>
</dbReference>
<dbReference type="eggNOG" id="ENOG502QTTA">
    <property type="taxonomic scope" value="Eukaryota"/>
</dbReference>
<dbReference type="HOGENOM" id="CLU_001992_2_1_1"/>
<dbReference type="InParanoid" id="Q9CA71"/>
<dbReference type="OMA" id="FFCEESQ"/>
<dbReference type="OrthoDB" id="428346at2759"/>
<dbReference type="PhylomeDB" id="Q9CA71"/>
<dbReference type="UniPathway" id="UPA00378"/>
<dbReference type="PRO" id="PR:Q9CA71"/>
<dbReference type="Proteomes" id="UP000006548">
    <property type="component" value="Chromosome 1"/>
</dbReference>
<dbReference type="ExpressionAtlas" id="Q9CA71">
    <property type="expression patterns" value="baseline and differential"/>
</dbReference>
<dbReference type="GO" id="GO:0032580">
    <property type="term" value="C:Golgi cisterna membrane"/>
    <property type="evidence" value="ECO:0007669"/>
    <property type="project" value="UniProtKB-SubCell"/>
</dbReference>
<dbReference type="GO" id="GO:0008107">
    <property type="term" value="F:galactoside 2-alpha-L-fucosyltransferase activity"/>
    <property type="evidence" value="ECO:0007669"/>
    <property type="project" value="InterPro"/>
</dbReference>
<dbReference type="GO" id="GO:0042546">
    <property type="term" value="P:cell wall biogenesis"/>
    <property type="evidence" value="ECO:0007669"/>
    <property type="project" value="InterPro"/>
</dbReference>
<dbReference type="GO" id="GO:0071555">
    <property type="term" value="P:cell wall organization"/>
    <property type="evidence" value="ECO:0007669"/>
    <property type="project" value="UniProtKB-KW"/>
</dbReference>
<dbReference type="GO" id="GO:0006486">
    <property type="term" value="P:protein glycosylation"/>
    <property type="evidence" value="ECO:0007669"/>
    <property type="project" value="UniProtKB-UniPathway"/>
</dbReference>
<dbReference type="FunFam" id="3.40.50.11340:FF:000011">
    <property type="entry name" value="Fucosyltransferase 3"/>
    <property type="match status" value="1"/>
</dbReference>
<dbReference type="Gene3D" id="3.40.50.11340">
    <property type="match status" value="1"/>
</dbReference>
<dbReference type="InterPro" id="IPR004938">
    <property type="entry name" value="XG_FTase"/>
</dbReference>
<dbReference type="PANTHER" id="PTHR31889">
    <property type="entry name" value="FUCOSYLTRANSFERASE 2-RELATED"/>
    <property type="match status" value="1"/>
</dbReference>
<dbReference type="PANTHER" id="PTHR31889:SF2">
    <property type="entry name" value="FUCOSYLTRANSFERASE 3"/>
    <property type="match status" value="1"/>
</dbReference>
<dbReference type="Pfam" id="PF03254">
    <property type="entry name" value="XG_FTase"/>
    <property type="match status" value="1"/>
</dbReference>
<organism>
    <name type="scientific">Arabidopsis thaliana</name>
    <name type="common">Mouse-ear cress</name>
    <dbReference type="NCBI Taxonomy" id="3702"/>
    <lineage>
        <taxon>Eukaryota</taxon>
        <taxon>Viridiplantae</taxon>
        <taxon>Streptophyta</taxon>
        <taxon>Embryophyta</taxon>
        <taxon>Tracheophyta</taxon>
        <taxon>Spermatophyta</taxon>
        <taxon>Magnoliopsida</taxon>
        <taxon>eudicotyledons</taxon>
        <taxon>Gunneridae</taxon>
        <taxon>Pentapetalae</taxon>
        <taxon>rosids</taxon>
        <taxon>malvids</taxon>
        <taxon>Brassicales</taxon>
        <taxon>Brassicaceae</taxon>
        <taxon>Camelineae</taxon>
        <taxon>Arabidopsis</taxon>
    </lineage>
</organism>